<organism>
    <name type="scientific">Aquifex aeolicus (strain VF5)</name>
    <dbReference type="NCBI Taxonomy" id="224324"/>
    <lineage>
        <taxon>Bacteria</taxon>
        <taxon>Pseudomonadati</taxon>
        <taxon>Aquificota</taxon>
        <taxon>Aquificia</taxon>
        <taxon>Aquificales</taxon>
        <taxon>Aquificaceae</taxon>
        <taxon>Aquifex</taxon>
    </lineage>
</organism>
<accession>O66607</accession>
<reference key="1">
    <citation type="journal article" date="1998" name="Nature">
        <title>The complete genome of the hyperthermophilic bacterium Aquifex aeolicus.</title>
        <authorList>
            <person name="Deckert G."/>
            <person name="Warren P.V."/>
            <person name="Gaasterland T."/>
            <person name="Young W.G."/>
            <person name="Lenox A.L."/>
            <person name="Graham D.E."/>
            <person name="Overbeek R."/>
            <person name="Snead M.A."/>
            <person name="Keller M."/>
            <person name="Aujay M."/>
            <person name="Huber R."/>
            <person name="Feldman R.A."/>
            <person name="Short J.M."/>
            <person name="Olsen G.J."/>
            <person name="Swanson R.V."/>
        </authorList>
    </citation>
    <scope>NUCLEOTIDE SEQUENCE [LARGE SCALE GENOMIC DNA]</scope>
    <source>
        <strain>VF5</strain>
    </source>
</reference>
<keyword id="KW-0028">Amino-acid biosynthesis</keyword>
<keyword id="KW-0100">Branched-chain amino acid biosynthesis</keyword>
<keyword id="KW-0963">Cytoplasm</keyword>
<keyword id="KW-0432">Leucine biosynthesis</keyword>
<keyword id="KW-0460">Magnesium</keyword>
<keyword id="KW-0464">Manganese</keyword>
<keyword id="KW-0479">Metal-binding</keyword>
<keyword id="KW-0520">NAD</keyword>
<keyword id="KW-0560">Oxidoreductase</keyword>
<keyword id="KW-1185">Reference proteome</keyword>
<comment type="function">
    <text evidence="1">Catalyzes the oxidation of 3-carboxy-2-hydroxy-4-methylpentanoate (3-isopropylmalate) to 3-carboxy-4-methyl-2-oxopentanoate. The product decarboxylates to 4-methyl-2 oxopentanoate (By similarity).</text>
</comment>
<comment type="catalytic activity">
    <reaction>
        <text>(2R,3S)-3-isopropylmalate + NAD(+) = 4-methyl-2-oxopentanoate + CO2 + NADH</text>
        <dbReference type="Rhea" id="RHEA:32271"/>
        <dbReference type="ChEBI" id="CHEBI:16526"/>
        <dbReference type="ChEBI" id="CHEBI:17865"/>
        <dbReference type="ChEBI" id="CHEBI:35121"/>
        <dbReference type="ChEBI" id="CHEBI:57540"/>
        <dbReference type="ChEBI" id="CHEBI:57945"/>
        <dbReference type="EC" id="1.1.1.85"/>
    </reaction>
</comment>
<comment type="cofactor">
    <cofactor evidence="1">
        <name>Mg(2+)</name>
        <dbReference type="ChEBI" id="CHEBI:18420"/>
    </cofactor>
    <cofactor evidence="1">
        <name>Mn(2+)</name>
        <dbReference type="ChEBI" id="CHEBI:29035"/>
    </cofactor>
    <text evidence="1">Binds 1 Mg(2+) or Mn(2+) ion per subunit.</text>
</comment>
<comment type="pathway">
    <text>Amino-acid biosynthesis; L-leucine biosynthesis; L-leucine from 3-methyl-2-oxobutanoate: step 3/4.</text>
</comment>
<comment type="subunit">
    <text evidence="1">Homodimer.</text>
</comment>
<comment type="subcellular location">
    <subcellularLocation>
        <location evidence="1">Cytoplasm</location>
    </subcellularLocation>
</comment>
<comment type="similarity">
    <text evidence="2">Belongs to the isocitrate and isopropylmalate dehydrogenases family. LeuB type 1 subfamily.</text>
</comment>
<dbReference type="EC" id="1.1.1.85"/>
<dbReference type="EMBL" id="AE000657">
    <property type="protein sequence ID" value="AAC06564.1"/>
    <property type="molecule type" value="Genomic_DNA"/>
</dbReference>
<dbReference type="PIR" id="C70322">
    <property type="entry name" value="C70322"/>
</dbReference>
<dbReference type="RefSeq" id="NP_213167.1">
    <property type="nucleotide sequence ID" value="NC_000918.1"/>
</dbReference>
<dbReference type="RefSeq" id="WP_010880105.1">
    <property type="nucleotide sequence ID" value="NC_000918.1"/>
</dbReference>
<dbReference type="SMR" id="O66607"/>
<dbReference type="FunCoup" id="O66607">
    <property type="interactions" value="399"/>
</dbReference>
<dbReference type="STRING" id="224324.aq_244"/>
<dbReference type="EnsemblBacteria" id="AAC06564">
    <property type="protein sequence ID" value="AAC06564"/>
    <property type="gene ID" value="aq_244"/>
</dbReference>
<dbReference type="KEGG" id="aae:aq_244"/>
<dbReference type="PATRIC" id="fig|224324.8.peg.199"/>
<dbReference type="eggNOG" id="COG0473">
    <property type="taxonomic scope" value="Bacteria"/>
</dbReference>
<dbReference type="HOGENOM" id="CLU_031953_0_3_0"/>
<dbReference type="InParanoid" id="O66607"/>
<dbReference type="OrthoDB" id="9806254at2"/>
<dbReference type="UniPathway" id="UPA00048">
    <property type="reaction ID" value="UER00072"/>
</dbReference>
<dbReference type="Proteomes" id="UP000000798">
    <property type="component" value="Chromosome"/>
</dbReference>
<dbReference type="GO" id="GO:0005829">
    <property type="term" value="C:cytosol"/>
    <property type="evidence" value="ECO:0000318"/>
    <property type="project" value="GO_Central"/>
</dbReference>
<dbReference type="GO" id="GO:0003862">
    <property type="term" value="F:3-isopropylmalate dehydrogenase activity"/>
    <property type="evidence" value="ECO:0000318"/>
    <property type="project" value="GO_Central"/>
</dbReference>
<dbReference type="GO" id="GO:0000287">
    <property type="term" value="F:magnesium ion binding"/>
    <property type="evidence" value="ECO:0007669"/>
    <property type="project" value="InterPro"/>
</dbReference>
<dbReference type="GO" id="GO:0051287">
    <property type="term" value="F:NAD binding"/>
    <property type="evidence" value="ECO:0007669"/>
    <property type="project" value="InterPro"/>
</dbReference>
<dbReference type="GO" id="GO:0009098">
    <property type="term" value="P:L-leucine biosynthetic process"/>
    <property type="evidence" value="ECO:0000318"/>
    <property type="project" value="GO_Central"/>
</dbReference>
<dbReference type="FunFam" id="3.40.718.10:FF:000028">
    <property type="entry name" value="3-isopropylmalate dehydrogenase"/>
    <property type="match status" value="1"/>
</dbReference>
<dbReference type="Gene3D" id="3.40.718.10">
    <property type="entry name" value="Isopropylmalate Dehydrogenase"/>
    <property type="match status" value="1"/>
</dbReference>
<dbReference type="HAMAP" id="MF_01033">
    <property type="entry name" value="LeuB_type1"/>
    <property type="match status" value="1"/>
</dbReference>
<dbReference type="InterPro" id="IPR019818">
    <property type="entry name" value="IsoCit/isopropylmalate_DH_CS"/>
</dbReference>
<dbReference type="InterPro" id="IPR024084">
    <property type="entry name" value="IsoPropMal-DH-like_dom"/>
</dbReference>
<dbReference type="InterPro" id="IPR004429">
    <property type="entry name" value="Isopropylmalate_DH"/>
</dbReference>
<dbReference type="NCBIfam" id="TIGR00169">
    <property type="entry name" value="leuB"/>
    <property type="match status" value="1"/>
</dbReference>
<dbReference type="PANTHER" id="PTHR42979">
    <property type="entry name" value="3-ISOPROPYLMALATE DEHYDROGENASE"/>
    <property type="match status" value="1"/>
</dbReference>
<dbReference type="PANTHER" id="PTHR42979:SF1">
    <property type="entry name" value="3-ISOPROPYLMALATE DEHYDROGENASE"/>
    <property type="match status" value="1"/>
</dbReference>
<dbReference type="Pfam" id="PF00180">
    <property type="entry name" value="Iso_dh"/>
    <property type="match status" value="1"/>
</dbReference>
<dbReference type="SMART" id="SM01329">
    <property type="entry name" value="Iso_dh"/>
    <property type="match status" value="1"/>
</dbReference>
<dbReference type="SUPFAM" id="SSF53659">
    <property type="entry name" value="Isocitrate/Isopropylmalate dehydrogenase-like"/>
    <property type="match status" value="1"/>
</dbReference>
<dbReference type="PROSITE" id="PS00470">
    <property type="entry name" value="IDH_IMDH"/>
    <property type="match status" value="1"/>
</dbReference>
<sequence length="364" mass="40714">MKKYKIAVLKGDGIGPEIVEQALRVLDKIGEIYGVEFEYREGLIGGEAIDKTGDPLPEETLKICKESDAILLGAVGGPKWDNLPTDKRPEKGLLRIRKELDLYANLRPAKVWDALISSSPLKEEVVKGTDMIVIRELTSGIYYGEPRGIFEENGKRYAINTMKYTEDEIRRIVRKGFEIARKRRKKLTSVDKANVLEVSALWRQIVEEEKENYPDVELEHLYIDNCAMQLVRRPTSFDVIVTGNIFGDILSDEAGVVVGSLGMLPSASIGDRYALYEPVHGSAPDIAGKGIANPIATILSAAMMLKYSFNMDKAHDLIEKAIEETLNQGYRTPDIYSEGCIKVGTKEITDKILENLERLKDAYT</sequence>
<feature type="chain" id="PRO_0000083629" description="3-isopropylmalate dehydrogenase">
    <location>
        <begin position="1"/>
        <end position="364"/>
    </location>
</feature>
<feature type="binding site" evidence="1">
    <location>
        <begin position="77"/>
        <end position="90"/>
    </location>
    <ligand>
        <name>NAD(+)</name>
        <dbReference type="ChEBI" id="CHEBI:57540"/>
    </ligand>
</feature>
<feature type="binding site" evidence="1">
    <location>
        <position position="97"/>
    </location>
    <ligand>
        <name>substrate</name>
    </ligand>
</feature>
<feature type="binding site" evidence="1">
    <location>
        <position position="107"/>
    </location>
    <ligand>
        <name>substrate</name>
    </ligand>
</feature>
<feature type="binding site" evidence="1">
    <location>
        <position position="135"/>
    </location>
    <ligand>
        <name>substrate</name>
    </ligand>
</feature>
<feature type="binding site" evidence="1">
    <location>
        <position position="224"/>
    </location>
    <ligand>
        <name>Mg(2+)</name>
        <dbReference type="ChEBI" id="CHEBI:18420"/>
    </ligand>
</feature>
<feature type="binding site" evidence="1">
    <location>
        <position position="224"/>
    </location>
    <ligand>
        <name>substrate</name>
    </ligand>
</feature>
<feature type="binding site" evidence="1">
    <location>
        <position position="248"/>
    </location>
    <ligand>
        <name>Mg(2+)</name>
        <dbReference type="ChEBI" id="CHEBI:18420"/>
    </ligand>
</feature>
<feature type="binding site" evidence="1">
    <location>
        <position position="252"/>
    </location>
    <ligand>
        <name>Mg(2+)</name>
        <dbReference type="ChEBI" id="CHEBI:18420"/>
    </ligand>
</feature>
<feature type="binding site" evidence="1">
    <location>
        <begin position="281"/>
        <end position="293"/>
    </location>
    <ligand>
        <name>NAD(+)</name>
        <dbReference type="ChEBI" id="CHEBI:57540"/>
    </ligand>
</feature>
<feature type="site" description="Important for catalysis" evidence="1">
    <location>
        <position position="142"/>
    </location>
</feature>
<feature type="site" description="Important for catalysis" evidence="1">
    <location>
        <position position="192"/>
    </location>
</feature>
<protein>
    <recommendedName>
        <fullName>3-isopropylmalate dehydrogenase</fullName>
        <ecNumber>1.1.1.85</ecNumber>
    </recommendedName>
    <alternativeName>
        <fullName>3-IPM-DH</fullName>
    </alternativeName>
    <alternativeName>
        <fullName>Beta-IPM dehydrogenase</fullName>
        <shortName>IMDH</shortName>
    </alternativeName>
</protein>
<name>LEU3_AQUAE</name>
<proteinExistence type="inferred from homology"/>
<evidence type="ECO:0000250" key="1"/>
<evidence type="ECO:0000305" key="2"/>
<gene>
    <name type="primary">leuB</name>
    <name type="ordered locus">aq_244</name>
</gene>